<feature type="chain" id="PRO_0000339013" description="ATP synthase subunit alpha">
    <location>
        <begin position="1"/>
        <end position="514"/>
    </location>
</feature>
<feature type="binding site" evidence="1">
    <location>
        <begin position="170"/>
        <end position="177"/>
    </location>
    <ligand>
        <name>ATP</name>
        <dbReference type="ChEBI" id="CHEBI:30616"/>
    </ligand>
</feature>
<feature type="site" description="Required for activity" evidence="1">
    <location>
        <position position="374"/>
    </location>
</feature>
<proteinExistence type="inferred from homology"/>
<name>ATPA_ACIBY</name>
<protein>
    <recommendedName>
        <fullName evidence="1">ATP synthase subunit alpha</fullName>
        <ecNumber evidence="1">7.1.2.2</ecNumber>
    </recommendedName>
    <alternativeName>
        <fullName evidence="1">ATP synthase F1 sector subunit alpha</fullName>
    </alternativeName>
    <alternativeName>
        <fullName evidence="1">F-ATPase subunit alpha</fullName>
    </alternativeName>
</protein>
<gene>
    <name evidence="1" type="primary">atpA</name>
    <name type="ordered locus">ABAYE3718</name>
</gene>
<keyword id="KW-0066">ATP synthesis</keyword>
<keyword id="KW-0067">ATP-binding</keyword>
<keyword id="KW-0997">Cell inner membrane</keyword>
<keyword id="KW-1003">Cell membrane</keyword>
<keyword id="KW-0139">CF(1)</keyword>
<keyword id="KW-0375">Hydrogen ion transport</keyword>
<keyword id="KW-0406">Ion transport</keyword>
<keyword id="KW-0472">Membrane</keyword>
<keyword id="KW-0547">Nucleotide-binding</keyword>
<keyword id="KW-1278">Translocase</keyword>
<keyword id="KW-0813">Transport</keyword>
<reference key="1">
    <citation type="journal article" date="2008" name="PLoS ONE">
        <title>Comparative analysis of Acinetobacters: three genomes for three lifestyles.</title>
        <authorList>
            <person name="Vallenet D."/>
            <person name="Nordmann P."/>
            <person name="Barbe V."/>
            <person name="Poirel L."/>
            <person name="Mangenot S."/>
            <person name="Bataille E."/>
            <person name="Dossat C."/>
            <person name="Gas S."/>
            <person name="Kreimeyer A."/>
            <person name="Lenoble P."/>
            <person name="Oztas S."/>
            <person name="Poulain J."/>
            <person name="Segurens B."/>
            <person name="Robert C."/>
            <person name="Abergel C."/>
            <person name="Claverie J.-M."/>
            <person name="Raoult D."/>
            <person name="Medigue C."/>
            <person name="Weissenbach J."/>
            <person name="Cruveiller S."/>
        </authorList>
    </citation>
    <scope>NUCLEOTIDE SEQUENCE [LARGE SCALE GENOMIC DNA]</scope>
    <source>
        <strain>AYE</strain>
    </source>
</reference>
<sequence length="514" mass="55397">MQQLNPSEISALIKQRIGDLDTSATAKNEGTIVMVSDGIVRIHGLADAMYGEMIEFDGGLFGMALNLEQDSVGAVVLGNYLSLQEGQKARCTGRVLEVPVGPELLGRVVDALGNPIDGKGPIDAKLTDAVEKVAPGVIWRQSVDQPVQTGYKSVDTMIPVGRGQRELIIGDRQTGKTAMAIDAIIAQKNSGIKCVYVAIGQKQSTIANVVRKLEETGAMAYTTVVAAAAADPAAMQYLAPYSGCTMGEYFRDRGEDALIIYDDLSKQAVAYRQISLLLRRPPGREAYPGDVFYLHSRLLERASRVSAEYVEKFTNGAVTGKTGSLTALPIIETQAGDVSAFVPTNVISITDGQIFLETSLFNAGIRPAVNAGISVSRVGGSAQTKIIKKLSGGIRTALAQYRELAAFAQFASDLDEATRKQLEHGQRVTELMKQKQYAPYSIADQAVSVYASNEGYMADVEVKKIVDFDAALIAYFRSEYAPLMKQIDETGDYNKDIEAAIKAGIESFKATQTY</sequence>
<organism>
    <name type="scientific">Acinetobacter baumannii (strain AYE)</name>
    <dbReference type="NCBI Taxonomy" id="509173"/>
    <lineage>
        <taxon>Bacteria</taxon>
        <taxon>Pseudomonadati</taxon>
        <taxon>Pseudomonadota</taxon>
        <taxon>Gammaproteobacteria</taxon>
        <taxon>Moraxellales</taxon>
        <taxon>Moraxellaceae</taxon>
        <taxon>Acinetobacter</taxon>
        <taxon>Acinetobacter calcoaceticus/baumannii complex</taxon>
    </lineage>
</organism>
<evidence type="ECO:0000255" key="1">
    <source>
        <dbReference type="HAMAP-Rule" id="MF_01346"/>
    </source>
</evidence>
<evidence type="ECO:0000305" key="2"/>
<comment type="function">
    <text evidence="1">Produces ATP from ADP in the presence of a proton gradient across the membrane. The alpha chain is a regulatory subunit.</text>
</comment>
<comment type="catalytic activity">
    <reaction evidence="1">
        <text>ATP + H2O + 4 H(+)(in) = ADP + phosphate + 5 H(+)(out)</text>
        <dbReference type="Rhea" id="RHEA:57720"/>
        <dbReference type="ChEBI" id="CHEBI:15377"/>
        <dbReference type="ChEBI" id="CHEBI:15378"/>
        <dbReference type="ChEBI" id="CHEBI:30616"/>
        <dbReference type="ChEBI" id="CHEBI:43474"/>
        <dbReference type="ChEBI" id="CHEBI:456216"/>
        <dbReference type="EC" id="7.1.2.2"/>
    </reaction>
</comment>
<comment type="subunit">
    <text evidence="1">F-type ATPases have 2 components, CF(1) - the catalytic core - and CF(0) - the membrane proton channel. CF(1) has five subunits: alpha(3), beta(3), gamma(1), delta(1), epsilon(1). CF(0) has three main subunits: a(1), b(2) and c(9-12). The alpha and beta chains form an alternating ring which encloses part of the gamma chain. CF(1) is attached to CF(0) by a central stalk formed by the gamma and epsilon chains, while a peripheral stalk is formed by the delta and b chains.</text>
</comment>
<comment type="subcellular location">
    <subcellularLocation>
        <location evidence="1">Cell inner membrane</location>
        <topology evidence="1">Peripheral membrane protein</topology>
    </subcellularLocation>
</comment>
<comment type="similarity">
    <text evidence="1">Belongs to the ATPase alpha/beta chains family.</text>
</comment>
<comment type="sequence caution" evidence="2">
    <conflict type="erroneous initiation">
        <sequence resource="EMBL-CDS" id="CAM88482"/>
    </conflict>
</comment>
<accession>B0VBP5</accession>
<dbReference type="EC" id="7.1.2.2" evidence="1"/>
<dbReference type="EMBL" id="CU459141">
    <property type="protein sequence ID" value="CAM88482.1"/>
    <property type="status" value="ALT_INIT"/>
    <property type="molecule type" value="Genomic_DNA"/>
</dbReference>
<dbReference type="RefSeq" id="WP_001186635.1">
    <property type="nucleotide sequence ID" value="NZ_JBDGFB010000006.1"/>
</dbReference>
<dbReference type="SMR" id="B0VBP5"/>
<dbReference type="EnsemblBacteria" id="CAM88482">
    <property type="protein sequence ID" value="CAM88482"/>
    <property type="gene ID" value="ABAYE3718"/>
</dbReference>
<dbReference type="GeneID" id="92892165"/>
<dbReference type="KEGG" id="aby:ABAYE3718"/>
<dbReference type="HOGENOM" id="CLU_010091_2_1_6"/>
<dbReference type="GO" id="GO:0005886">
    <property type="term" value="C:plasma membrane"/>
    <property type="evidence" value="ECO:0007669"/>
    <property type="project" value="UniProtKB-SubCell"/>
</dbReference>
<dbReference type="GO" id="GO:0045259">
    <property type="term" value="C:proton-transporting ATP synthase complex"/>
    <property type="evidence" value="ECO:0007669"/>
    <property type="project" value="UniProtKB-KW"/>
</dbReference>
<dbReference type="GO" id="GO:0043531">
    <property type="term" value="F:ADP binding"/>
    <property type="evidence" value="ECO:0007669"/>
    <property type="project" value="TreeGrafter"/>
</dbReference>
<dbReference type="GO" id="GO:0005524">
    <property type="term" value="F:ATP binding"/>
    <property type="evidence" value="ECO:0007669"/>
    <property type="project" value="UniProtKB-UniRule"/>
</dbReference>
<dbReference type="GO" id="GO:0046933">
    <property type="term" value="F:proton-transporting ATP synthase activity, rotational mechanism"/>
    <property type="evidence" value="ECO:0007669"/>
    <property type="project" value="UniProtKB-UniRule"/>
</dbReference>
<dbReference type="CDD" id="cd18113">
    <property type="entry name" value="ATP-synt_F1_alpha_C"/>
    <property type="match status" value="1"/>
</dbReference>
<dbReference type="CDD" id="cd18116">
    <property type="entry name" value="ATP-synt_F1_alpha_N"/>
    <property type="match status" value="1"/>
</dbReference>
<dbReference type="CDD" id="cd01132">
    <property type="entry name" value="F1-ATPase_alpha_CD"/>
    <property type="match status" value="1"/>
</dbReference>
<dbReference type="FunFam" id="1.20.150.20:FF:000001">
    <property type="entry name" value="ATP synthase subunit alpha"/>
    <property type="match status" value="1"/>
</dbReference>
<dbReference type="FunFam" id="2.40.30.20:FF:000001">
    <property type="entry name" value="ATP synthase subunit alpha"/>
    <property type="match status" value="1"/>
</dbReference>
<dbReference type="FunFam" id="3.40.50.300:FF:000002">
    <property type="entry name" value="ATP synthase subunit alpha"/>
    <property type="match status" value="1"/>
</dbReference>
<dbReference type="Gene3D" id="2.40.30.20">
    <property type="match status" value="1"/>
</dbReference>
<dbReference type="Gene3D" id="1.20.150.20">
    <property type="entry name" value="ATP synthase alpha/beta chain, C-terminal domain"/>
    <property type="match status" value="1"/>
</dbReference>
<dbReference type="Gene3D" id="3.40.50.300">
    <property type="entry name" value="P-loop containing nucleotide triphosphate hydrolases"/>
    <property type="match status" value="1"/>
</dbReference>
<dbReference type="HAMAP" id="MF_01346">
    <property type="entry name" value="ATP_synth_alpha_bact"/>
    <property type="match status" value="1"/>
</dbReference>
<dbReference type="InterPro" id="IPR023366">
    <property type="entry name" value="ATP_synth_asu-like_sf"/>
</dbReference>
<dbReference type="InterPro" id="IPR000793">
    <property type="entry name" value="ATP_synth_asu_C"/>
</dbReference>
<dbReference type="InterPro" id="IPR038376">
    <property type="entry name" value="ATP_synth_asu_C_sf"/>
</dbReference>
<dbReference type="InterPro" id="IPR033732">
    <property type="entry name" value="ATP_synth_F1_a_nt-bd_dom"/>
</dbReference>
<dbReference type="InterPro" id="IPR005294">
    <property type="entry name" value="ATP_synth_F1_asu"/>
</dbReference>
<dbReference type="InterPro" id="IPR020003">
    <property type="entry name" value="ATPase_a/bsu_AS"/>
</dbReference>
<dbReference type="InterPro" id="IPR004100">
    <property type="entry name" value="ATPase_F1/V1/A1_a/bsu_N"/>
</dbReference>
<dbReference type="InterPro" id="IPR036121">
    <property type="entry name" value="ATPase_F1/V1/A1_a/bsu_N_sf"/>
</dbReference>
<dbReference type="InterPro" id="IPR000194">
    <property type="entry name" value="ATPase_F1/V1/A1_a/bsu_nucl-bd"/>
</dbReference>
<dbReference type="InterPro" id="IPR027417">
    <property type="entry name" value="P-loop_NTPase"/>
</dbReference>
<dbReference type="NCBIfam" id="TIGR00962">
    <property type="entry name" value="atpA"/>
    <property type="match status" value="1"/>
</dbReference>
<dbReference type="NCBIfam" id="NF009884">
    <property type="entry name" value="PRK13343.1"/>
    <property type="match status" value="1"/>
</dbReference>
<dbReference type="PANTHER" id="PTHR48082">
    <property type="entry name" value="ATP SYNTHASE SUBUNIT ALPHA, MITOCHONDRIAL"/>
    <property type="match status" value="1"/>
</dbReference>
<dbReference type="PANTHER" id="PTHR48082:SF2">
    <property type="entry name" value="ATP SYNTHASE SUBUNIT ALPHA, MITOCHONDRIAL"/>
    <property type="match status" value="1"/>
</dbReference>
<dbReference type="Pfam" id="PF00006">
    <property type="entry name" value="ATP-synt_ab"/>
    <property type="match status" value="1"/>
</dbReference>
<dbReference type="Pfam" id="PF00306">
    <property type="entry name" value="ATP-synt_ab_C"/>
    <property type="match status" value="1"/>
</dbReference>
<dbReference type="Pfam" id="PF02874">
    <property type="entry name" value="ATP-synt_ab_N"/>
    <property type="match status" value="1"/>
</dbReference>
<dbReference type="SUPFAM" id="SSF47917">
    <property type="entry name" value="C-terminal domain of alpha and beta subunits of F1 ATP synthase"/>
    <property type="match status" value="1"/>
</dbReference>
<dbReference type="SUPFAM" id="SSF50615">
    <property type="entry name" value="N-terminal domain of alpha and beta subunits of F1 ATP synthase"/>
    <property type="match status" value="1"/>
</dbReference>
<dbReference type="SUPFAM" id="SSF52540">
    <property type="entry name" value="P-loop containing nucleoside triphosphate hydrolases"/>
    <property type="match status" value="1"/>
</dbReference>
<dbReference type="PROSITE" id="PS00152">
    <property type="entry name" value="ATPASE_ALPHA_BETA"/>
    <property type="match status" value="1"/>
</dbReference>